<feature type="chain" id="PRO_0000193695" description="Chitin synthase 2">
    <location>
        <begin position="1"/>
        <end position="928"/>
    </location>
</feature>
<feature type="transmembrane region" description="Helical" evidence="1">
    <location>
        <begin position="472"/>
        <end position="492"/>
    </location>
</feature>
<feature type="transmembrane region" description="Helical" evidence="1">
    <location>
        <begin position="570"/>
        <end position="589"/>
    </location>
</feature>
<feature type="transmembrane region" description="Helical" evidence="1">
    <location>
        <begin position="613"/>
        <end position="633"/>
    </location>
</feature>
<feature type="transmembrane region" description="Helical" evidence="1">
    <location>
        <begin position="644"/>
        <end position="664"/>
    </location>
</feature>
<feature type="transmembrane region" description="Helical" evidence="1">
    <location>
        <begin position="678"/>
        <end position="698"/>
    </location>
</feature>
<feature type="transmembrane region" description="Helical" evidence="1">
    <location>
        <begin position="723"/>
        <end position="743"/>
    </location>
</feature>
<feature type="transmembrane region" description="Helical" evidence="1">
    <location>
        <begin position="753"/>
        <end position="773"/>
    </location>
</feature>
<feature type="transmembrane region" description="Helical" evidence="1">
    <location>
        <begin position="854"/>
        <end position="874"/>
    </location>
</feature>
<feature type="transmembrane region" description="Helical" evidence="1">
    <location>
        <begin position="893"/>
        <end position="913"/>
    </location>
</feature>
<feature type="region of interest" description="Disordered" evidence="2">
    <location>
        <begin position="1"/>
        <end position="45"/>
    </location>
</feature>
<feature type="region of interest" description="Disordered" evidence="2">
    <location>
        <begin position="110"/>
        <end position="179"/>
    </location>
</feature>
<feature type="compositionally biased region" description="Polar residues" evidence="2">
    <location>
        <begin position="17"/>
        <end position="28"/>
    </location>
</feature>
<feature type="compositionally biased region" description="Basic and acidic residues" evidence="2">
    <location>
        <begin position="130"/>
        <end position="140"/>
    </location>
</feature>
<feature type="sequence conflict" description="In Ref. 2; AAA30335." evidence="7" ref="2">
    <original>VV</original>
    <variation>KL</variation>
    <location>
        <begin position="259"/>
        <end position="260"/>
    </location>
</feature>
<feature type="sequence conflict" description="In Ref. 2; AAA30335." evidence="7" ref="2">
    <original>M</original>
    <variation>L</variation>
    <location>
        <position position="462"/>
    </location>
</feature>
<keyword id="KW-1003">Cell membrane</keyword>
<keyword id="KW-0961">Cell wall biogenesis/degradation</keyword>
<keyword id="KW-0328">Glycosyltransferase</keyword>
<keyword id="KW-0472">Membrane</keyword>
<keyword id="KW-0808">Transferase</keyword>
<keyword id="KW-0812">Transmembrane</keyword>
<keyword id="KW-1133">Transmembrane helix</keyword>
<keyword id="KW-0843">Virulence</keyword>
<accession>P30601</accession>
<accession>O74210</accession>
<comment type="function">
    <text evidence="3 5 8">Polymerizes chitin, a structural polymer of the cell wall and septum, by transferring the sugar moiety of UDP-GlcNAc to the non-reducing end of the growing chitin polymer (Probable). CHS2 plays a synergistic role to CHS1 in normal yeast cell reproductive growth, even if this role is less predominant than for CHS1 (PubMed:16544168). With CHS3, plays an important role in virulence (PubMed:11705928).</text>
</comment>
<comment type="catalytic activity">
    <reaction evidence="9">
        <text>[(1-&gt;4)-N-acetyl-beta-D-glucosaminyl](n) + UDP-N-acetyl-alpha-D-glucosamine = [(1-&gt;4)-N-acetyl-beta-D-glucosaminyl](n+1) + UDP + H(+)</text>
        <dbReference type="Rhea" id="RHEA:16637"/>
        <dbReference type="Rhea" id="RHEA-COMP:9593"/>
        <dbReference type="Rhea" id="RHEA-COMP:9595"/>
        <dbReference type="ChEBI" id="CHEBI:15378"/>
        <dbReference type="ChEBI" id="CHEBI:17029"/>
        <dbReference type="ChEBI" id="CHEBI:57705"/>
        <dbReference type="ChEBI" id="CHEBI:58223"/>
        <dbReference type="EC" id="2.4.1.16"/>
    </reaction>
    <physiologicalReaction direction="left-to-right" evidence="7 9">
        <dbReference type="Rhea" id="RHEA:16638"/>
    </physiologicalReaction>
</comment>
<comment type="subcellular location">
    <subcellularLocation>
        <location evidence="7">Cell membrane</location>
        <topology evidence="1">Multi-pass membrane protein</topology>
    </subcellularLocation>
</comment>
<comment type="induction">
    <text evidence="4">The expression levels changes little with temperature change, regardless of whether the exposure to the higher temperature is for 3 h or 24 h.</text>
</comment>
<comment type="disruption phenotype">
    <text evidence="3 4 5">Leads to dramatically altered cell morphologies when CHS1 is also disrupted (PubMed:16544168). Does not affect virulence when solely disrupted but the virulence is drastically reduced in a mouse model of acute infection in a doucble CHS2-CHS3 disruptant (PubMed:11705928). Leads to increased expression of the other chitin synthase genes for compensation (PubMed:12213927).</text>
</comment>
<comment type="similarity">
    <text evidence="7">Belongs to the chitin synthase family. Class I subfamily.</text>
</comment>
<proteinExistence type="evidence at transcript level"/>
<protein>
    <recommendedName>
        <fullName evidence="6">Chitin synthase 2</fullName>
        <ecNumber evidence="9">2.4.1.16</ecNumber>
    </recommendedName>
    <alternativeName>
        <fullName evidence="6">Chitin-UDP acetyl-glucosaminyl transferase 2</fullName>
    </alternativeName>
    <alternativeName>
        <fullName evidence="6">Class-I chitin synthase 2</fullName>
    </alternativeName>
</protein>
<reference key="1">
    <citation type="submission" date="1998-03" db="EMBL/GenBank/DDBJ databases">
        <title>Cloning and characterization of WdCHS2, a class I chitin synthase gene, in Wangiella (Exophiala) dermatitidis.</title>
        <authorList>
            <person name="Zheng L."/>
            <person name="Szaniszlo P.J."/>
        </authorList>
    </citation>
    <scope>NUCLEOTIDE SEQUENCE [GENOMIC DNA]</scope>
    <source>
        <strain>8656</strain>
    </source>
</reference>
<reference key="2">
    <citation type="journal article" date="1992" name="Proc. Natl. Acad. Sci. U.S.A.">
        <title>Classification of fungal chitin synthases.</title>
        <authorList>
            <person name="Bowen A.R."/>
            <person name="Chen-Wu J.L.-P."/>
            <person name="Momany M."/>
            <person name="Young R."/>
            <person name="Szaniszlo P.J."/>
            <person name="Robbins P.W."/>
        </authorList>
    </citation>
    <scope>NUCLEOTIDE SEQUENCE [GENOMIC DNA] OF 259-462</scope>
</reference>
<reference key="3">
    <citation type="journal article" date="2001" name="Infect. Immun.">
        <title>WdChs2p, a class I chitin synthase, together with WdChs3p (class III) contributes to virulence in Wangiella (Exophiala) dermatitidis.</title>
        <authorList>
            <person name="Wang Z."/>
            <person name="Zheng L."/>
            <person name="Liu H."/>
            <person name="Wang Q."/>
            <person name="Hauser M."/>
            <person name="Kauffman S."/>
            <person name="Becker J.M."/>
            <person name="Szaniszlo P.J."/>
        </authorList>
    </citation>
    <scope>FUNCTION</scope>
    <scope>DISRUPTION PHENOTYPE</scope>
</reference>
<reference key="4">
    <citation type="journal article" date="2002" name="Microbiology">
        <title>Compensatory expression of five chitin synthase genes, a response to stress stimuli, in Wangiella (Exophiala) dermatitidis, a melanized fungal pathogen of humans.</title>
        <authorList>
            <person name="Wang Q."/>
            <person name="Liu H."/>
            <person name="Szaniszlo P.J."/>
        </authorList>
    </citation>
    <scope>INDUCTION</scope>
    <scope>DISRUPTION PHENOTYPE</scope>
</reference>
<reference key="5">
    <citation type="journal article" date="2006" name="Arch. Microbiol.">
        <title>WdChs1p, a class II chitin synthase, is more responsible than WdChs2p (Class I) for normal yeast reproductive growth in the polymorphic, pathogenic fungus Wangiella (Exophiala) dermatitidis.</title>
        <authorList>
            <person name="Zheng L."/>
            <person name="Mendoza L."/>
            <person name="Wang Z."/>
            <person name="Liu H."/>
            <person name="Park C."/>
            <person name="Kauffman S."/>
            <person name="Becker J.M."/>
            <person name="Szaniszlo P.J."/>
        </authorList>
    </citation>
    <scope>FUNCTION</scope>
    <scope>DISRUPTION PHENOTYPE</scope>
</reference>
<dbReference type="EC" id="2.4.1.16" evidence="9"/>
<dbReference type="EMBL" id="AF052606">
    <property type="protein sequence ID" value="AAC34496.1"/>
    <property type="molecule type" value="Genomic_DNA"/>
</dbReference>
<dbReference type="EMBL" id="M81906">
    <property type="protein sequence ID" value="AAA30335.1"/>
    <property type="molecule type" value="Genomic_DNA"/>
</dbReference>
<dbReference type="PIR" id="A45188">
    <property type="entry name" value="A45188"/>
</dbReference>
<dbReference type="SMR" id="P30601"/>
<dbReference type="CAZy" id="GT2">
    <property type="family name" value="Glycosyltransferase Family 2"/>
</dbReference>
<dbReference type="VEuPathDB" id="FungiDB:HMPREF1120_06816"/>
<dbReference type="PHI-base" id="PHI:236"/>
<dbReference type="GO" id="GO:0030428">
    <property type="term" value="C:cell septum"/>
    <property type="evidence" value="ECO:0007669"/>
    <property type="project" value="TreeGrafter"/>
</dbReference>
<dbReference type="GO" id="GO:0005886">
    <property type="term" value="C:plasma membrane"/>
    <property type="evidence" value="ECO:0007669"/>
    <property type="project" value="UniProtKB-SubCell"/>
</dbReference>
<dbReference type="GO" id="GO:0004100">
    <property type="term" value="F:chitin synthase activity"/>
    <property type="evidence" value="ECO:0007669"/>
    <property type="project" value="UniProtKB-EC"/>
</dbReference>
<dbReference type="GO" id="GO:0071555">
    <property type="term" value="P:cell wall organization"/>
    <property type="evidence" value="ECO:0007669"/>
    <property type="project" value="UniProtKB-KW"/>
</dbReference>
<dbReference type="GO" id="GO:0006031">
    <property type="term" value="P:chitin biosynthetic process"/>
    <property type="evidence" value="ECO:0007669"/>
    <property type="project" value="InterPro"/>
</dbReference>
<dbReference type="CDD" id="cd04190">
    <property type="entry name" value="Chitin_synth_C"/>
    <property type="match status" value="1"/>
</dbReference>
<dbReference type="InterPro" id="IPR004835">
    <property type="entry name" value="Chitin_synth"/>
</dbReference>
<dbReference type="InterPro" id="IPR004834">
    <property type="entry name" value="Chitin_synth_fun"/>
</dbReference>
<dbReference type="InterPro" id="IPR013616">
    <property type="entry name" value="Chitin_synth_N"/>
</dbReference>
<dbReference type="InterPro" id="IPR029044">
    <property type="entry name" value="Nucleotide-diphossugar_trans"/>
</dbReference>
<dbReference type="PANTHER" id="PTHR22914">
    <property type="entry name" value="CHITIN SYNTHASE"/>
    <property type="match status" value="1"/>
</dbReference>
<dbReference type="PANTHER" id="PTHR22914:SF9">
    <property type="entry name" value="CHITIN SYNTHASE 1"/>
    <property type="match status" value="1"/>
</dbReference>
<dbReference type="Pfam" id="PF01644">
    <property type="entry name" value="Chitin_synth_1"/>
    <property type="match status" value="1"/>
</dbReference>
<dbReference type="Pfam" id="PF08407">
    <property type="entry name" value="Chitin_synth_1N"/>
    <property type="match status" value="1"/>
</dbReference>
<dbReference type="SUPFAM" id="SSF53448">
    <property type="entry name" value="Nucleotide-diphospho-sugar transferases"/>
    <property type="match status" value="1"/>
</dbReference>
<name>CHS2_EXODE</name>
<gene>
    <name evidence="6" type="primary">CHS2</name>
</gene>
<sequence>MAYNRLGSPQRDGPYSPSAQPQYDSRSPSPGRPLQPYIHPDEAYARQQPLHLQMPTASDDRLAMQPTYSVENVHNPQAYGQQYGQHLPDSGDMGYGRNDYIVSPEEHHDAYYTQPYSPHPQGDYALDPYPSHDEPYRPDTDNVPILQPDSAYGPDPHTQPGMDYDDYQEEPRPTPSPAPIRRWKTVKEVQLFNGNLVLDCPVPPKLLANVPHAKPPERDEFTHMRYSAATCDPSDFHNERFTLRQRLFAKPRQTELFIVVTMYNEDEFLFARTMIGVFKNIEFMCNRSSSKTWGKEAWKKIVVCIVSDGRAKINPRTRAVLAGLGVYQDGIAKQQVNGKDVTAHIYEYTTQVGLELKGTQVSLKPRSATPVQLLFCLKEKNQKKINSHRWFFQAFGRVLDPNICVLIDAGTKPGKDSIYQLWKAFDLEPMCGGACGEIKVMLDHGKKLLNPLVATQNFEYKMSNILDKPLESAFGFISVLPGAFCAYRYVALQNDKNGVGPLEKYFKGETMHADAGVFTANMYLAEDRILCFELVSKRNCRWILQYVKSATGETDVPDRIPEFVLQRRRWLNGSFFAAVYAVAHVYQLWRTDHSFLRKLMFLIEFTYQTINMLFAWFAIGNFFLVFRLLTASLGTKETLGTAGTVLGVVFEFVYLGTLLYCFILSMGNRPQGNPKSYMMMVIFWSVLMVWLTFASIFLTVKSIETEVQQKDFSFSTIFNNSTFFGLIVSLASTYVLWFVASFLFFDPWHMFTCFLQYIVLTPTYINVLNIYAFCNTHDITWGTKGDDKAEKLPSANVKPGGKVDVLIPQDDGDLNAQYDSELKKFATKPPKEVKAPNPADKQEDYYKSFRSNVVTAWMITNFILVAAVLNIAGFDRINVHDTQQQNSTIYLAVILWSVAGLSLFRFTGACWFLVVRMVSLEIWSVCKV</sequence>
<evidence type="ECO:0000255" key="1"/>
<evidence type="ECO:0000256" key="2">
    <source>
        <dbReference type="SAM" id="MobiDB-lite"/>
    </source>
</evidence>
<evidence type="ECO:0000269" key="3">
    <source>
    </source>
</evidence>
<evidence type="ECO:0000269" key="4">
    <source>
    </source>
</evidence>
<evidence type="ECO:0000269" key="5">
    <source>
    </source>
</evidence>
<evidence type="ECO:0000303" key="6">
    <source>
    </source>
</evidence>
<evidence type="ECO:0000305" key="7"/>
<evidence type="ECO:0000305" key="8">
    <source>
    </source>
</evidence>
<evidence type="ECO:0000305" key="9">
    <source>
    </source>
</evidence>
<organism>
    <name type="scientific">Exophiala dermatitidis</name>
    <name type="common">Black yeast-like fungus</name>
    <name type="synonym">Wangiella dermatitidis</name>
    <dbReference type="NCBI Taxonomy" id="5970"/>
    <lineage>
        <taxon>Eukaryota</taxon>
        <taxon>Fungi</taxon>
        <taxon>Dikarya</taxon>
        <taxon>Ascomycota</taxon>
        <taxon>Pezizomycotina</taxon>
        <taxon>Eurotiomycetes</taxon>
        <taxon>Chaetothyriomycetidae</taxon>
        <taxon>Chaetothyriales</taxon>
        <taxon>Herpotrichiellaceae</taxon>
        <taxon>Exophiala</taxon>
    </lineage>
</organism>